<reference key="1">
    <citation type="submission" date="2007-06" db="EMBL/GenBank/DDBJ databases">
        <title>Complete sequence of Methanococcus maripaludis C7.</title>
        <authorList>
            <consortium name="US DOE Joint Genome Institute"/>
            <person name="Copeland A."/>
            <person name="Lucas S."/>
            <person name="Lapidus A."/>
            <person name="Barry K."/>
            <person name="Glavina del Rio T."/>
            <person name="Dalin E."/>
            <person name="Tice H."/>
            <person name="Pitluck S."/>
            <person name="Clum A."/>
            <person name="Schmutz J."/>
            <person name="Larimer F."/>
            <person name="Land M."/>
            <person name="Hauser L."/>
            <person name="Kyrpides N."/>
            <person name="Anderson I."/>
            <person name="Sieprawska-Lupa M."/>
            <person name="Whitman W.B."/>
            <person name="Richardson P."/>
        </authorList>
    </citation>
    <scope>NUCLEOTIDE SEQUENCE [LARGE SCALE GENOMIC DNA]</scope>
    <source>
        <strain>C7 / ATCC BAA-1331</strain>
    </source>
</reference>
<protein>
    <recommendedName>
        <fullName evidence="1">Arginine--tRNA ligase</fullName>
        <ecNumber evidence="1">6.1.1.19</ecNumber>
    </recommendedName>
    <alternativeName>
        <fullName evidence="1">Arginyl-tRNA synthetase</fullName>
        <shortName evidence="1">ArgRS</shortName>
    </alternativeName>
</protein>
<dbReference type="EC" id="6.1.1.19" evidence="1"/>
<dbReference type="EMBL" id="CP000745">
    <property type="protein sequence ID" value="ABR65338.1"/>
    <property type="molecule type" value="Genomic_DNA"/>
</dbReference>
<dbReference type="SMR" id="A6VFW2"/>
<dbReference type="STRING" id="426368.MmarC7_0268"/>
<dbReference type="KEGG" id="mmz:MmarC7_0268"/>
<dbReference type="eggNOG" id="arCOG00487">
    <property type="taxonomic scope" value="Archaea"/>
</dbReference>
<dbReference type="HOGENOM" id="CLU_006406_6_1_2"/>
<dbReference type="OrthoDB" id="372102at2157"/>
<dbReference type="GO" id="GO:0005737">
    <property type="term" value="C:cytoplasm"/>
    <property type="evidence" value="ECO:0007669"/>
    <property type="project" value="UniProtKB-SubCell"/>
</dbReference>
<dbReference type="GO" id="GO:0004814">
    <property type="term" value="F:arginine-tRNA ligase activity"/>
    <property type="evidence" value="ECO:0007669"/>
    <property type="project" value="UniProtKB-UniRule"/>
</dbReference>
<dbReference type="GO" id="GO:0005524">
    <property type="term" value="F:ATP binding"/>
    <property type="evidence" value="ECO:0007669"/>
    <property type="project" value="UniProtKB-UniRule"/>
</dbReference>
<dbReference type="GO" id="GO:0006420">
    <property type="term" value="P:arginyl-tRNA aminoacylation"/>
    <property type="evidence" value="ECO:0007669"/>
    <property type="project" value="UniProtKB-UniRule"/>
</dbReference>
<dbReference type="CDD" id="cd00671">
    <property type="entry name" value="ArgRS_core"/>
    <property type="match status" value="1"/>
</dbReference>
<dbReference type="Gene3D" id="3.30.1360.70">
    <property type="entry name" value="Arginyl tRNA synthetase N-terminal domain"/>
    <property type="match status" value="1"/>
</dbReference>
<dbReference type="Gene3D" id="3.40.50.620">
    <property type="entry name" value="HUPs"/>
    <property type="match status" value="1"/>
</dbReference>
<dbReference type="Gene3D" id="1.10.730.10">
    <property type="entry name" value="Isoleucyl-tRNA Synthetase, Domain 1"/>
    <property type="match status" value="1"/>
</dbReference>
<dbReference type="HAMAP" id="MF_00123">
    <property type="entry name" value="Arg_tRNA_synth"/>
    <property type="match status" value="1"/>
</dbReference>
<dbReference type="InterPro" id="IPR001412">
    <property type="entry name" value="aa-tRNA-synth_I_CS"/>
</dbReference>
<dbReference type="InterPro" id="IPR001278">
    <property type="entry name" value="Arg-tRNA-ligase"/>
</dbReference>
<dbReference type="InterPro" id="IPR005148">
    <property type="entry name" value="Arg-tRNA-synth_N"/>
</dbReference>
<dbReference type="InterPro" id="IPR036695">
    <property type="entry name" value="Arg-tRNA-synth_N_sf"/>
</dbReference>
<dbReference type="InterPro" id="IPR035684">
    <property type="entry name" value="ArgRS_core"/>
</dbReference>
<dbReference type="InterPro" id="IPR008909">
    <property type="entry name" value="DALR_anticod-bd"/>
</dbReference>
<dbReference type="InterPro" id="IPR014729">
    <property type="entry name" value="Rossmann-like_a/b/a_fold"/>
</dbReference>
<dbReference type="InterPro" id="IPR009080">
    <property type="entry name" value="tRNAsynth_Ia_anticodon-bd"/>
</dbReference>
<dbReference type="NCBIfam" id="TIGR00456">
    <property type="entry name" value="argS"/>
    <property type="match status" value="1"/>
</dbReference>
<dbReference type="PANTHER" id="PTHR11956:SF5">
    <property type="entry name" value="ARGININE--TRNA LIGASE, CYTOPLASMIC"/>
    <property type="match status" value="1"/>
</dbReference>
<dbReference type="PANTHER" id="PTHR11956">
    <property type="entry name" value="ARGINYL-TRNA SYNTHETASE"/>
    <property type="match status" value="1"/>
</dbReference>
<dbReference type="Pfam" id="PF03485">
    <property type="entry name" value="Arg_tRNA_synt_N"/>
    <property type="match status" value="1"/>
</dbReference>
<dbReference type="Pfam" id="PF05746">
    <property type="entry name" value="DALR_1"/>
    <property type="match status" value="1"/>
</dbReference>
<dbReference type="Pfam" id="PF00750">
    <property type="entry name" value="tRNA-synt_1d"/>
    <property type="match status" value="1"/>
</dbReference>
<dbReference type="PRINTS" id="PR01038">
    <property type="entry name" value="TRNASYNTHARG"/>
</dbReference>
<dbReference type="SMART" id="SM01016">
    <property type="entry name" value="Arg_tRNA_synt_N"/>
    <property type="match status" value="1"/>
</dbReference>
<dbReference type="SMART" id="SM00836">
    <property type="entry name" value="DALR_1"/>
    <property type="match status" value="1"/>
</dbReference>
<dbReference type="SUPFAM" id="SSF47323">
    <property type="entry name" value="Anticodon-binding domain of a subclass of class I aminoacyl-tRNA synthetases"/>
    <property type="match status" value="1"/>
</dbReference>
<dbReference type="SUPFAM" id="SSF55190">
    <property type="entry name" value="Arginyl-tRNA synthetase (ArgRS), N-terminal 'additional' domain"/>
    <property type="match status" value="1"/>
</dbReference>
<dbReference type="SUPFAM" id="SSF52374">
    <property type="entry name" value="Nucleotidylyl transferase"/>
    <property type="match status" value="1"/>
</dbReference>
<dbReference type="PROSITE" id="PS00178">
    <property type="entry name" value="AA_TRNA_LIGASE_I"/>
    <property type="match status" value="1"/>
</dbReference>
<proteinExistence type="inferred from homology"/>
<organism>
    <name type="scientific">Methanococcus maripaludis (strain C7 / ATCC BAA-1331)</name>
    <dbReference type="NCBI Taxonomy" id="426368"/>
    <lineage>
        <taxon>Archaea</taxon>
        <taxon>Methanobacteriati</taxon>
        <taxon>Methanobacteriota</taxon>
        <taxon>Methanomada group</taxon>
        <taxon>Methanococci</taxon>
        <taxon>Methanococcales</taxon>
        <taxon>Methanococcaceae</taxon>
        <taxon>Methanococcus</taxon>
    </lineage>
</organism>
<name>SYR_METM7</name>
<keyword id="KW-0030">Aminoacyl-tRNA synthetase</keyword>
<keyword id="KW-0067">ATP-binding</keyword>
<keyword id="KW-0963">Cytoplasm</keyword>
<keyword id="KW-0436">Ligase</keyword>
<keyword id="KW-0547">Nucleotide-binding</keyword>
<keyword id="KW-0648">Protein biosynthesis</keyword>
<gene>
    <name evidence="1" type="primary">argS</name>
    <name type="ordered locus">MmarC7_0268</name>
</gene>
<accession>A6VFW2</accession>
<sequence length="566" mass="64348">MDVENLIITTLKDKVEELTGNEMDIRLDEPPAINMGDYSTNISFRLAKDLKKAPKVIAEDIANSLNISGIEKIEAVNGYINFFMNYSDFSKETVSKIIDEKENFGKLEKRHEKVILEHTSANPNGPFHIGHGRNMVIGDSLKRILVASGYDVETQYYVNDMGRQEAIVVFGNEKFELDKSKKADHAIGEVYVETNKLLAENEELEQEILNLMKNYEEACEAGIENELTEKFKNAVDYSLGGFKETLSTLNIYHDKFVWESEFVKSGMVREVIKRLMDTGKVVEDEVFRLDLSDYGLEKKLVLARLNGTSLYSTRDIAYHINKMENCDFAVNLLGADHKLTAVMVNKTLALLGYNEAEVVFYEFISLPEGSMSTRRGRFISMDELFEEAKSRAAEEVRKRGVAESEEEIEEIAKKIAVGAVRYNIVRIAPEKPMVFRWDEALDFEKVGCPVIQYAHARCSRILENVEIISNDNLFAYEMNENEKTIVKLLSKLPKIVEKAAEVRKPQIVANYVLDVAQGFNKFYANCPVLKEENQIIKNSRIAIVNNTKMVLENTLDLLGIEMPGKM</sequence>
<evidence type="ECO:0000255" key="1">
    <source>
        <dbReference type="HAMAP-Rule" id="MF_00123"/>
    </source>
</evidence>
<feature type="chain" id="PRO_1000018063" description="Arginine--tRNA ligase">
    <location>
        <begin position="1"/>
        <end position="566"/>
    </location>
</feature>
<feature type="short sequence motif" description="'HIGH' region">
    <location>
        <begin position="121"/>
        <end position="131"/>
    </location>
</feature>
<comment type="catalytic activity">
    <reaction evidence="1">
        <text>tRNA(Arg) + L-arginine + ATP = L-arginyl-tRNA(Arg) + AMP + diphosphate</text>
        <dbReference type="Rhea" id="RHEA:20301"/>
        <dbReference type="Rhea" id="RHEA-COMP:9658"/>
        <dbReference type="Rhea" id="RHEA-COMP:9673"/>
        <dbReference type="ChEBI" id="CHEBI:30616"/>
        <dbReference type="ChEBI" id="CHEBI:32682"/>
        <dbReference type="ChEBI" id="CHEBI:33019"/>
        <dbReference type="ChEBI" id="CHEBI:78442"/>
        <dbReference type="ChEBI" id="CHEBI:78513"/>
        <dbReference type="ChEBI" id="CHEBI:456215"/>
        <dbReference type="EC" id="6.1.1.19"/>
    </reaction>
</comment>
<comment type="subcellular location">
    <subcellularLocation>
        <location evidence="1">Cytoplasm</location>
    </subcellularLocation>
</comment>
<comment type="similarity">
    <text evidence="1">Belongs to the class-I aminoacyl-tRNA synthetase family.</text>
</comment>